<dbReference type="EC" id="3.1.3.5" evidence="1"/>
<dbReference type="EC" id="3.1.3.6" evidence="1"/>
<dbReference type="EC" id="3.6.1.11" evidence="1"/>
<dbReference type="EMBL" id="CP000822">
    <property type="protein sequence ID" value="ABV15171.1"/>
    <property type="molecule type" value="Genomic_DNA"/>
</dbReference>
<dbReference type="RefSeq" id="WP_012134860.1">
    <property type="nucleotide sequence ID" value="NC_009792.1"/>
</dbReference>
<dbReference type="SMR" id="A8ANV8"/>
<dbReference type="STRING" id="290338.CKO_04105"/>
<dbReference type="GeneID" id="45137742"/>
<dbReference type="KEGG" id="cko:CKO_04105"/>
<dbReference type="HOGENOM" id="CLU_045192_1_2_6"/>
<dbReference type="OrthoDB" id="9780815at2"/>
<dbReference type="Proteomes" id="UP000008148">
    <property type="component" value="Chromosome"/>
</dbReference>
<dbReference type="GO" id="GO:0005737">
    <property type="term" value="C:cytoplasm"/>
    <property type="evidence" value="ECO:0007669"/>
    <property type="project" value="UniProtKB-SubCell"/>
</dbReference>
<dbReference type="GO" id="GO:0008254">
    <property type="term" value="F:3'-nucleotidase activity"/>
    <property type="evidence" value="ECO:0007669"/>
    <property type="project" value="UniProtKB-UniRule"/>
</dbReference>
<dbReference type="GO" id="GO:0008253">
    <property type="term" value="F:5'-nucleotidase activity"/>
    <property type="evidence" value="ECO:0007669"/>
    <property type="project" value="UniProtKB-UniRule"/>
</dbReference>
<dbReference type="GO" id="GO:0004309">
    <property type="term" value="F:exopolyphosphatase activity"/>
    <property type="evidence" value="ECO:0007669"/>
    <property type="project" value="UniProtKB-UniRule"/>
</dbReference>
<dbReference type="GO" id="GO:0046872">
    <property type="term" value="F:metal ion binding"/>
    <property type="evidence" value="ECO:0007669"/>
    <property type="project" value="UniProtKB-UniRule"/>
</dbReference>
<dbReference type="GO" id="GO:0000166">
    <property type="term" value="F:nucleotide binding"/>
    <property type="evidence" value="ECO:0007669"/>
    <property type="project" value="UniProtKB-KW"/>
</dbReference>
<dbReference type="FunFam" id="3.40.1210.10:FF:000001">
    <property type="entry name" value="5'/3'-nucleotidase SurE"/>
    <property type="match status" value="1"/>
</dbReference>
<dbReference type="Gene3D" id="3.40.1210.10">
    <property type="entry name" value="Survival protein SurE-like phosphatase/nucleotidase"/>
    <property type="match status" value="1"/>
</dbReference>
<dbReference type="HAMAP" id="MF_00060">
    <property type="entry name" value="SurE"/>
    <property type="match status" value="1"/>
</dbReference>
<dbReference type="InterPro" id="IPR030048">
    <property type="entry name" value="SurE"/>
</dbReference>
<dbReference type="InterPro" id="IPR002828">
    <property type="entry name" value="SurE-like_Pase/nucleotidase"/>
</dbReference>
<dbReference type="InterPro" id="IPR036523">
    <property type="entry name" value="SurE-like_sf"/>
</dbReference>
<dbReference type="NCBIfam" id="NF001488">
    <property type="entry name" value="PRK00346.1-1"/>
    <property type="match status" value="1"/>
</dbReference>
<dbReference type="NCBIfam" id="NF001489">
    <property type="entry name" value="PRK00346.1-3"/>
    <property type="match status" value="1"/>
</dbReference>
<dbReference type="NCBIfam" id="NF001490">
    <property type="entry name" value="PRK00346.1-4"/>
    <property type="match status" value="1"/>
</dbReference>
<dbReference type="NCBIfam" id="TIGR00087">
    <property type="entry name" value="surE"/>
    <property type="match status" value="1"/>
</dbReference>
<dbReference type="PANTHER" id="PTHR30457">
    <property type="entry name" value="5'-NUCLEOTIDASE SURE"/>
    <property type="match status" value="1"/>
</dbReference>
<dbReference type="PANTHER" id="PTHR30457:SF12">
    <property type="entry name" value="5'_3'-NUCLEOTIDASE SURE"/>
    <property type="match status" value="1"/>
</dbReference>
<dbReference type="Pfam" id="PF01975">
    <property type="entry name" value="SurE"/>
    <property type="match status" value="1"/>
</dbReference>
<dbReference type="SUPFAM" id="SSF64167">
    <property type="entry name" value="SurE-like"/>
    <property type="match status" value="1"/>
</dbReference>
<feature type="chain" id="PRO_1000007720" description="5'/3'-nucleotidase SurE">
    <location>
        <begin position="1"/>
        <end position="253"/>
    </location>
</feature>
<feature type="binding site" evidence="1">
    <location>
        <position position="8"/>
    </location>
    <ligand>
        <name>a divalent metal cation</name>
        <dbReference type="ChEBI" id="CHEBI:60240"/>
    </ligand>
</feature>
<feature type="binding site" evidence="1">
    <location>
        <position position="9"/>
    </location>
    <ligand>
        <name>a divalent metal cation</name>
        <dbReference type="ChEBI" id="CHEBI:60240"/>
    </ligand>
</feature>
<feature type="binding site" evidence="1">
    <location>
        <position position="39"/>
    </location>
    <ligand>
        <name>a divalent metal cation</name>
        <dbReference type="ChEBI" id="CHEBI:60240"/>
    </ligand>
</feature>
<feature type="binding site" evidence="1">
    <location>
        <position position="92"/>
    </location>
    <ligand>
        <name>a divalent metal cation</name>
        <dbReference type="ChEBI" id="CHEBI:60240"/>
    </ligand>
</feature>
<keyword id="KW-0963">Cytoplasm</keyword>
<keyword id="KW-0378">Hydrolase</keyword>
<keyword id="KW-0479">Metal-binding</keyword>
<keyword id="KW-0547">Nucleotide-binding</keyword>
<keyword id="KW-1185">Reference proteome</keyword>
<proteinExistence type="inferred from homology"/>
<protein>
    <recommendedName>
        <fullName evidence="1">5'/3'-nucleotidase SurE</fullName>
        <ecNumber evidence="1">3.1.3.5</ecNumber>
        <ecNumber evidence="1">3.1.3.6</ecNumber>
    </recommendedName>
    <alternativeName>
        <fullName evidence="1">Exopolyphosphatase</fullName>
        <ecNumber evidence="1">3.6.1.11</ecNumber>
    </alternativeName>
    <alternativeName>
        <fullName evidence="1">Nucleoside monophosphate phosphohydrolase</fullName>
    </alternativeName>
</protein>
<reference key="1">
    <citation type="submission" date="2007-08" db="EMBL/GenBank/DDBJ databases">
        <authorList>
            <consortium name="The Citrobacter koseri Genome Sequencing Project"/>
            <person name="McClelland M."/>
            <person name="Sanderson E.K."/>
            <person name="Porwollik S."/>
            <person name="Spieth J."/>
            <person name="Clifton W.S."/>
            <person name="Latreille P."/>
            <person name="Courtney L."/>
            <person name="Wang C."/>
            <person name="Pepin K."/>
            <person name="Bhonagiri V."/>
            <person name="Nash W."/>
            <person name="Johnson M."/>
            <person name="Thiruvilangam P."/>
            <person name="Wilson R."/>
        </authorList>
    </citation>
    <scope>NUCLEOTIDE SEQUENCE [LARGE SCALE GENOMIC DNA]</scope>
    <source>
        <strain>ATCC BAA-895 / CDC 4225-83 / SGSC4696</strain>
    </source>
</reference>
<evidence type="ECO:0000255" key="1">
    <source>
        <dbReference type="HAMAP-Rule" id="MF_00060"/>
    </source>
</evidence>
<name>SURE_CITK8</name>
<organism>
    <name type="scientific">Citrobacter koseri (strain ATCC BAA-895 / CDC 4225-83 / SGSC4696)</name>
    <dbReference type="NCBI Taxonomy" id="290338"/>
    <lineage>
        <taxon>Bacteria</taxon>
        <taxon>Pseudomonadati</taxon>
        <taxon>Pseudomonadota</taxon>
        <taxon>Gammaproteobacteria</taxon>
        <taxon>Enterobacterales</taxon>
        <taxon>Enterobacteriaceae</taxon>
        <taxon>Citrobacter</taxon>
    </lineage>
</organism>
<gene>
    <name evidence="1" type="primary">surE</name>
    <name type="ordered locus">CKO_04105</name>
</gene>
<accession>A8ANV8</accession>
<comment type="function">
    <text evidence="1">Nucleotidase with a broad substrate specificity as it can dephosphorylate various ribo- and deoxyribonucleoside 5'-monophosphates and ribonucleoside 3'-monophosphates with highest affinity to 3'-AMP. Also hydrolyzes polyphosphate (exopolyphosphatase activity) with the preference for short-chain-length substrates (P20-25). Might be involved in the regulation of dNTP and NTP pools, and in the turnover of 3'-mononucleotides produced by numerous intracellular RNases (T1, T2, and F) during the degradation of various RNAs.</text>
</comment>
<comment type="catalytic activity">
    <reaction evidence="1">
        <text>a ribonucleoside 5'-phosphate + H2O = a ribonucleoside + phosphate</text>
        <dbReference type="Rhea" id="RHEA:12484"/>
        <dbReference type="ChEBI" id="CHEBI:15377"/>
        <dbReference type="ChEBI" id="CHEBI:18254"/>
        <dbReference type="ChEBI" id="CHEBI:43474"/>
        <dbReference type="ChEBI" id="CHEBI:58043"/>
        <dbReference type="EC" id="3.1.3.5"/>
    </reaction>
</comment>
<comment type="catalytic activity">
    <reaction evidence="1">
        <text>a ribonucleoside 3'-phosphate + H2O = a ribonucleoside + phosphate</text>
        <dbReference type="Rhea" id="RHEA:10144"/>
        <dbReference type="ChEBI" id="CHEBI:13197"/>
        <dbReference type="ChEBI" id="CHEBI:15377"/>
        <dbReference type="ChEBI" id="CHEBI:18254"/>
        <dbReference type="ChEBI" id="CHEBI:43474"/>
        <dbReference type="EC" id="3.1.3.6"/>
    </reaction>
</comment>
<comment type="catalytic activity">
    <reaction evidence="1">
        <text>[phosphate](n) + H2O = [phosphate](n-1) + phosphate + H(+)</text>
        <dbReference type="Rhea" id="RHEA:21528"/>
        <dbReference type="Rhea" id="RHEA-COMP:9859"/>
        <dbReference type="Rhea" id="RHEA-COMP:14279"/>
        <dbReference type="ChEBI" id="CHEBI:15377"/>
        <dbReference type="ChEBI" id="CHEBI:15378"/>
        <dbReference type="ChEBI" id="CHEBI:16838"/>
        <dbReference type="ChEBI" id="CHEBI:43474"/>
        <dbReference type="EC" id="3.6.1.11"/>
    </reaction>
</comment>
<comment type="cofactor">
    <cofactor evidence="1">
        <name>a divalent metal cation</name>
        <dbReference type="ChEBI" id="CHEBI:60240"/>
    </cofactor>
    <text evidence="1">Binds 1 divalent metal cation per subunit.</text>
</comment>
<comment type="subcellular location">
    <subcellularLocation>
        <location evidence="1">Cytoplasm</location>
    </subcellularLocation>
</comment>
<comment type="similarity">
    <text evidence="1">Belongs to the SurE nucleotidase family.</text>
</comment>
<sequence length="253" mass="27075">MRILLSNDDGVHAPGIQTLAKALREFADVQVVAPDRNRSGASNSLTLESSLRTFTFDNGDIAVQMGTPTDCVYLGVNALMRPRPDIVVSGINAGPNLGDDVIYSGTVAAAMEGRHLGFPALAVSLDGHQHYETAAAVTCSILRALRREPLRTGRILNINVPDLPLDQIKGIRVTRCGSRHPADQVIPQQDPRGNTLYWIGPPGGKCDAGPDTDFAAVDEGYVSVTPLHVDLTAYSAHDVVSDWLDSVGVDAQW</sequence>